<organism>
    <name type="scientific">Haemophilus influenzae (strain ATCC 51907 / DSM 11121 / KW20 / Rd)</name>
    <dbReference type="NCBI Taxonomy" id="71421"/>
    <lineage>
        <taxon>Bacteria</taxon>
        <taxon>Pseudomonadati</taxon>
        <taxon>Pseudomonadota</taxon>
        <taxon>Gammaproteobacteria</taxon>
        <taxon>Pasteurellales</taxon>
        <taxon>Pasteurellaceae</taxon>
        <taxon>Haemophilus</taxon>
    </lineage>
</organism>
<keyword id="KW-0997">Cell inner membrane</keyword>
<keyword id="KW-1003">Cell membrane</keyword>
<keyword id="KW-0472">Membrane</keyword>
<keyword id="KW-1185">Reference proteome</keyword>
<keyword id="KW-0812">Transmembrane</keyword>
<keyword id="KW-1133">Transmembrane helix</keyword>
<keyword id="KW-0813">Transport</keyword>
<proteinExistence type="inferred from homology"/>
<evidence type="ECO:0000255" key="1"/>
<evidence type="ECO:0000305" key="2"/>
<dbReference type="EMBL" id="L42023">
    <property type="protein sequence ID" value="AAC21728.1"/>
    <property type="molecule type" value="Genomic_DNA"/>
</dbReference>
<dbReference type="PIR" id="C64141">
    <property type="entry name" value="C64141"/>
</dbReference>
<dbReference type="RefSeq" id="NP_438223.1">
    <property type="nucleotide sequence ID" value="NC_000907.1"/>
</dbReference>
<dbReference type="SMR" id="P44483"/>
<dbReference type="STRING" id="71421.HI_0050"/>
<dbReference type="EnsemblBacteria" id="AAC21728">
    <property type="protein sequence ID" value="AAC21728"/>
    <property type="gene ID" value="HI_0050"/>
</dbReference>
<dbReference type="KEGG" id="hin:HI_0050"/>
<dbReference type="PATRIC" id="fig|71421.8.peg.50"/>
<dbReference type="eggNOG" id="COG1593">
    <property type="taxonomic scope" value="Bacteria"/>
</dbReference>
<dbReference type="HOGENOM" id="CLU_019824_4_1_6"/>
<dbReference type="OrthoDB" id="9796052at2"/>
<dbReference type="PhylomeDB" id="P44483"/>
<dbReference type="Proteomes" id="UP000000579">
    <property type="component" value="Chromosome"/>
</dbReference>
<dbReference type="GO" id="GO:0005886">
    <property type="term" value="C:plasma membrane"/>
    <property type="evidence" value="ECO:0000318"/>
    <property type="project" value="GO_Central"/>
</dbReference>
<dbReference type="GO" id="GO:0015144">
    <property type="term" value="F:carbohydrate transmembrane transporter activity"/>
    <property type="evidence" value="ECO:0000318"/>
    <property type="project" value="GO_Central"/>
</dbReference>
<dbReference type="InterPro" id="IPR010656">
    <property type="entry name" value="DctM"/>
</dbReference>
<dbReference type="InterPro" id="IPR004681">
    <property type="entry name" value="TRAP_DctM"/>
</dbReference>
<dbReference type="NCBIfam" id="TIGR00786">
    <property type="entry name" value="dctM"/>
    <property type="match status" value="1"/>
</dbReference>
<dbReference type="PANTHER" id="PTHR33362:SF4">
    <property type="entry name" value="2,3-DIKETO-L-GULONATE TRAP TRANSPORTER LARGE PERMEASE PROTEIN YIAN"/>
    <property type="match status" value="1"/>
</dbReference>
<dbReference type="PANTHER" id="PTHR33362">
    <property type="entry name" value="SIALIC ACID TRAP TRANSPORTER PERMEASE PROTEIN SIAT-RELATED"/>
    <property type="match status" value="1"/>
</dbReference>
<dbReference type="Pfam" id="PF06808">
    <property type="entry name" value="DctM"/>
    <property type="match status" value="1"/>
</dbReference>
<dbReference type="PIRSF" id="PIRSF006066">
    <property type="entry name" value="HI0050"/>
    <property type="match status" value="1"/>
</dbReference>
<gene>
    <name type="ordered locus">HI_0050</name>
</gene>
<sequence>MLLSASIMLYHLDMFDTQLITENFVMGTNNFPLMAIPFFMLTGEIMKHGGISERIINFATSMVGHIKGGLGYVAIISGLIFAGLSGSAVADTAALGAILIPMMISKKYDGARSTGLICAAGIISVVIPPSIPMIIYGITAGASITKLFMGGTVPGLLMVVGLWVTWKILYRNNDTSLERKQTGKERWVAFKKAFWPLLLPIIIIVGLRGGIFTPTEAGVVAAIYAGIVSIAYKGLTFSKLKDVFIGTIKTTSMVMFVAASAMISAFAITVAQIPTELVQTIKGLTDSPTILMFIIMLFLLLVGCVMDLIPAVLIFVPVLLPVLRAYNIDIAYFGIMMVINLSIGLITPPVGTVLYVGSGISKLGIGALSKGIAPFLFVYAIIMMLIVFFPEIVIVPMNWLS</sequence>
<name>Y050_HAEIN</name>
<accession>P44483</accession>
<feature type="chain" id="PRO_0000169600" description="Putative TRAP transporter large permease protein HI_0050">
    <location>
        <begin position="1"/>
        <end position="401"/>
    </location>
</feature>
<feature type="transmembrane region" description="Helical" evidence="1">
    <location>
        <begin position="31"/>
        <end position="51"/>
    </location>
</feature>
<feature type="transmembrane region" description="Helical" evidence="1">
    <location>
        <begin position="70"/>
        <end position="90"/>
    </location>
</feature>
<feature type="transmembrane region" description="Helical" evidence="1">
    <location>
        <begin position="115"/>
        <end position="135"/>
    </location>
</feature>
<feature type="transmembrane region" description="Helical" evidence="1">
    <location>
        <begin position="144"/>
        <end position="164"/>
    </location>
</feature>
<feature type="transmembrane region" description="Helical" evidence="1">
    <location>
        <begin position="193"/>
        <end position="213"/>
    </location>
</feature>
<feature type="transmembrane region" description="Helical" evidence="1">
    <location>
        <begin position="217"/>
        <end position="237"/>
    </location>
</feature>
<feature type="transmembrane region" description="Helical" evidence="1">
    <location>
        <begin position="253"/>
        <end position="273"/>
    </location>
</feature>
<feature type="transmembrane region" description="Helical" evidence="1">
    <location>
        <begin position="290"/>
        <end position="310"/>
    </location>
</feature>
<feature type="transmembrane region" description="Helical" evidence="1">
    <location>
        <begin position="330"/>
        <end position="350"/>
    </location>
</feature>
<feature type="transmembrane region" description="Helical" evidence="1">
    <location>
        <begin position="353"/>
        <end position="373"/>
    </location>
</feature>
<feature type="transmembrane region" description="Helical" evidence="1">
    <location>
        <begin position="375"/>
        <end position="395"/>
    </location>
</feature>
<protein>
    <recommendedName>
        <fullName>Putative TRAP transporter large permease protein HI_0050</fullName>
    </recommendedName>
</protein>
<comment type="subcellular location">
    <subcellularLocation>
        <location evidence="2">Cell inner membrane</location>
        <topology evidence="2">Multi-pass membrane protein</topology>
    </subcellularLocation>
</comment>
<comment type="similarity">
    <text evidence="2">Belongs to the TRAP transporter large permease family.</text>
</comment>
<reference key="1">
    <citation type="journal article" date="1995" name="Science">
        <title>Whole-genome random sequencing and assembly of Haemophilus influenzae Rd.</title>
        <authorList>
            <person name="Fleischmann R.D."/>
            <person name="Adams M.D."/>
            <person name="White O."/>
            <person name="Clayton R.A."/>
            <person name="Kirkness E.F."/>
            <person name="Kerlavage A.R."/>
            <person name="Bult C.J."/>
            <person name="Tomb J.-F."/>
            <person name="Dougherty B.A."/>
            <person name="Merrick J.M."/>
            <person name="McKenney K."/>
            <person name="Sutton G.G."/>
            <person name="FitzHugh W."/>
            <person name="Fields C.A."/>
            <person name="Gocayne J.D."/>
            <person name="Scott J.D."/>
            <person name="Shirley R."/>
            <person name="Liu L.-I."/>
            <person name="Glodek A."/>
            <person name="Kelley J.M."/>
            <person name="Weidman J.F."/>
            <person name="Phillips C.A."/>
            <person name="Spriggs T."/>
            <person name="Hedblom E."/>
            <person name="Cotton M.D."/>
            <person name="Utterback T.R."/>
            <person name="Hanna M.C."/>
            <person name="Nguyen D.T."/>
            <person name="Saudek D.M."/>
            <person name="Brandon R.C."/>
            <person name="Fine L.D."/>
            <person name="Fritchman J.L."/>
            <person name="Fuhrmann J.L."/>
            <person name="Geoghagen N.S.M."/>
            <person name="Gnehm C.L."/>
            <person name="McDonald L.A."/>
            <person name="Small K.V."/>
            <person name="Fraser C.M."/>
            <person name="Smith H.O."/>
            <person name="Venter J.C."/>
        </authorList>
    </citation>
    <scope>NUCLEOTIDE SEQUENCE [LARGE SCALE GENOMIC DNA]</scope>
    <source>
        <strain>ATCC 51907 / DSM 11121 / KW20 / Rd</strain>
    </source>
</reference>